<organism>
    <name type="scientific">Francisella tularensis subsp. tularensis (strain SCHU S4 / Schu 4)</name>
    <dbReference type="NCBI Taxonomy" id="177416"/>
    <lineage>
        <taxon>Bacteria</taxon>
        <taxon>Pseudomonadati</taxon>
        <taxon>Pseudomonadota</taxon>
        <taxon>Gammaproteobacteria</taxon>
        <taxon>Thiotrichales</taxon>
        <taxon>Francisellaceae</taxon>
        <taxon>Francisella</taxon>
    </lineage>
</organism>
<sequence>MAKVSKRMKEISAKINAEKKYPVSEAFDLLREVSSVKFVESVDVSVALGVDPRKSDQVVRGASVLPNGTGKTVRVAVFAKGPAADAAKEAGAEVVGMEDLADEVKKGNMDFDVVIASPDSMRVVGQLGQILGPKGLMPNPKVGTVTMDVAKAVRDAKAGQVRYRVDKAGIIHTTIGKVNFTSDALKQNLEQLLTDLKKAKPAVSKGIYLKKVSVSSTMGPGINVDFSDLNI</sequence>
<name>RL1_FRATT</name>
<evidence type="ECO:0000255" key="1">
    <source>
        <dbReference type="HAMAP-Rule" id="MF_01318"/>
    </source>
</evidence>
<evidence type="ECO:0000305" key="2"/>
<accession>Q5NID5</accession>
<reference key="1">
    <citation type="journal article" date="2005" name="Nat. Genet.">
        <title>The complete genome sequence of Francisella tularensis, the causative agent of tularemia.</title>
        <authorList>
            <person name="Larsson P."/>
            <person name="Oyston P.C.F."/>
            <person name="Chain P."/>
            <person name="Chu M.C."/>
            <person name="Duffield M."/>
            <person name="Fuxelius H.-H."/>
            <person name="Garcia E."/>
            <person name="Haelltorp G."/>
            <person name="Johansson D."/>
            <person name="Isherwood K.E."/>
            <person name="Karp P.D."/>
            <person name="Larsson E."/>
            <person name="Liu Y."/>
            <person name="Michell S."/>
            <person name="Prior J."/>
            <person name="Prior R."/>
            <person name="Malfatti S."/>
            <person name="Sjoestedt A."/>
            <person name="Svensson K."/>
            <person name="Thompson N."/>
            <person name="Vergez L."/>
            <person name="Wagg J.K."/>
            <person name="Wren B.W."/>
            <person name="Lindler L.E."/>
            <person name="Andersson S.G.E."/>
            <person name="Forsman M."/>
            <person name="Titball R.W."/>
        </authorList>
    </citation>
    <scope>NUCLEOTIDE SEQUENCE [LARGE SCALE GENOMIC DNA]</scope>
    <source>
        <strain>SCHU S4 / Schu 4</strain>
    </source>
</reference>
<gene>
    <name evidence="1" type="primary">rplA</name>
    <name type="ordered locus">FTT_0141</name>
</gene>
<feature type="chain" id="PRO_0000125659" description="Large ribosomal subunit protein uL1">
    <location>
        <begin position="1"/>
        <end position="231"/>
    </location>
</feature>
<keyword id="KW-1185">Reference proteome</keyword>
<keyword id="KW-0678">Repressor</keyword>
<keyword id="KW-0687">Ribonucleoprotein</keyword>
<keyword id="KW-0689">Ribosomal protein</keyword>
<keyword id="KW-0694">RNA-binding</keyword>
<keyword id="KW-0699">rRNA-binding</keyword>
<keyword id="KW-0810">Translation regulation</keyword>
<keyword id="KW-0820">tRNA-binding</keyword>
<protein>
    <recommendedName>
        <fullName evidence="1">Large ribosomal subunit protein uL1</fullName>
    </recommendedName>
    <alternativeName>
        <fullName evidence="2">50S ribosomal protein L1</fullName>
    </alternativeName>
</protein>
<comment type="function">
    <text evidence="1">Binds directly to 23S rRNA. The L1 stalk is quite mobile in the ribosome, and is involved in E site tRNA release.</text>
</comment>
<comment type="function">
    <text evidence="1">Protein L1 is also a translational repressor protein, it controls the translation of the L11 operon by binding to its mRNA.</text>
</comment>
<comment type="subunit">
    <text evidence="1">Part of the 50S ribosomal subunit.</text>
</comment>
<comment type="similarity">
    <text evidence="1">Belongs to the universal ribosomal protein uL1 family.</text>
</comment>
<dbReference type="EMBL" id="AJ749949">
    <property type="protein sequence ID" value="CAG44774.1"/>
    <property type="molecule type" value="Genomic_DNA"/>
</dbReference>
<dbReference type="RefSeq" id="WP_003028678.1">
    <property type="nucleotide sequence ID" value="NZ_CP010290.1"/>
</dbReference>
<dbReference type="RefSeq" id="YP_169207.1">
    <property type="nucleotide sequence ID" value="NC_006570.2"/>
</dbReference>
<dbReference type="SMR" id="Q5NID5"/>
<dbReference type="STRING" id="177416.FTT_0141"/>
<dbReference type="DNASU" id="3192023"/>
<dbReference type="EnsemblBacteria" id="CAG44774">
    <property type="protein sequence ID" value="CAG44774"/>
    <property type="gene ID" value="FTT_0141"/>
</dbReference>
<dbReference type="GeneID" id="75264697"/>
<dbReference type="KEGG" id="ftu:FTT_0141"/>
<dbReference type="eggNOG" id="COG0081">
    <property type="taxonomic scope" value="Bacteria"/>
</dbReference>
<dbReference type="OrthoDB" id="9803740at2"/>
<dbReference type="Proteomes" id="UP000001174">
    <property type="component" value="Chromosome"/>
</dbReference>
<dbReference type="GO" id="GO:0022625">
    <property type="term" value="C:cytosolic large ribosomal subunit"/>
    <property type="evidence" value="ECO:0007669"/>
    <property type="project" value="TreeGrafter"/>
</dbReference>
<dbReference type="GO" id="GO:0019843">
    <property type="term" value="F:rRNA binding"/>
    <property type="evidence" value="ECO:0007669"/>
    <property type="project" value="UniProtKB-UniRule"/>
</dbReference>
<dbReference type="GO" id="GO:0003735">
    <property type="term" value="F:structural constituent of ribosome"/>
    <property type="evidence" value="ECO:0007669"/>
    <property type="project" value="InterPro"/>
</dbReference>
<dbReference type="GO" id="GO:0000049">
    <property type="term" value="F:tRNA binding"/>
    <property type="evidence" value="ECO:0007669"/>
    <property type="project" value="UniProtKB-KW"/>
</dbReference>
<dbReference type="GO" id="GO:0006417">
    <property type="term" value="P:regulation of translation"/>
    <property type="evidence" value="ECO:0007669"/>
    <property type="project" value="UniProtKB-KW"/>
</dbReference>
<dbReference type="GO" id="GO:0006412">
    <property type="term" value="P:translation"/>
    <property type="evidence" value="ECO:0007669"/>
    <property type="project" value="UniProtKB-UniRule"/>
</dbReference>
<dbReference type="CDD" id="cd00403">
    <property type="entry name" value="Ribosomal_L1"/>
    <property type="match status" value="1"/>
</dbReference>
<dbReference type="FunFam" id="3.40.50.790:FF:000001">
    <property type="entry name" value="50S ribosomal protein L1"/>
    <property type="match status" value="1"/>
</dbReference>
<dbReference type="Gene3D" id="3.30.190.20">
    <property type="match status" value="1"/>
</dbReference>
<dbReference type="Gene3D" id="3.40.50.790">
    <property type="match status" value="1"/>
</dbReference>
<dbReference type="HAMAP" id="MF_01318_B">
    <property type="entry name" value="Ribosomal_uL1_B"/>
    <property type="match status" value="1"/>
</dbReference>
<dbReference type="InterPro" id="IPR005878">
    <property type="entry name" value="Ribosom_uL1_bac-type"/>
</dbReference>
<dbReference type="InterPro" id="IPR002143">
    <property type="entry name" value="Ribosomal_uL1"/>
</dbReference>
<dbReference type="InterPro" id="IPR023674">
    <property type="entry name" value="Ribosomal_uL1-like"/>
</dbReference>
<dbReference type="InterPro" id="IPR028364">
    <property type="entry name" value="Ribosomal_uL1/biogenesis"/>
</dbReference>
<dbReference type="InterPro" id="IPR016095">
    <property type="entry name" value="Ribosomal_uL1_3-a/b-sand"/>
</dbReference>
<dbReference type="InterPro" id="IPR023673">
    <property type="entry name" value="Ribosomal_uL1_CS"/>
</dbReference>
<dbReference type="NCBIfam" id="TIGR01169">
    <property type="entry name" value="rplA_bact"/>
    <property type="match status" value="1"/>
</dbReference>
<dbReference type="PANTHER" id="PTHR36427">
    <property type="entry name" value="54S RIBOSOMAL PROTEIN L1, MITOCHONDRIAL"/>
    <property type="match status" value="1"/>
</dbReference>
<dbReference type="PANTHER" id="PTHR36427:SF3">
    <property type="entry name" value="LARGE RIBOSOMAL SUBUNIT PROTEIN UL1M"/>
    <property type="match status" value="1"/>
</dbReference>
<dbReference type="Pfam" id="PF00687">
    <property type="entry name" value="Ribosomal_L1"/>
    <property type="match status" value="1"/>
</dbReference>
<dbReference type="PIRSF" id="PIRSF002155">
    <property type="entry name" value="Ribosomal_L1"/>
    <property type="match status" value="1"/>
</dbReference>
<dbReference type="SUPFAM" id="SSF56808">
    <property type="entry name" value="Ribosomal protein L1"/>
    <property type="match status" value="1"/>
</dbReference>
<dbReference type="PROSITE" id="PS01199">
    <property type="entry name" value="RIBOSOMAL_L1"/>
    <property type="match status" value="1"/>
</dbReference>
<proteinExistence type="inferred from homology"/>